<sequence>MQVMNRYFLPKTGWEFFDVSRAYGVGVIVHTLSGDAVVSDMGGLYLIESQRELNFERIDQIHKFFGDDQAWDWTFITIGSGQREKTKKKVVEFLGNVEDIRNILDGLKELKSPVYIGSGKETLYQPMELAATKGIRDEILLKKQYSEGSPVKVSISDFTLSVLGHINATIRKFSNMGMIFAIPSPTRTRILHLIGEIRKRIDDSVKGLHRAGWFPSLAQIAVNLVLEELRVEEGGKFAPKFGSLIYGVMTKTGNQWKPLTGGIFPLDLLHQIAESNEAIKVLNKWKDIFEWTAFRKGYEDLPSALAEFITNPSLSNYERYIKLHLRNDIGKDRIKFGSYEEKVLKEVVNFVGV</sequence>
<feature type="chain" id="PRO_0000127822" description="Uncharacterized protein AF_0070">
    <location>
        <begin position="1"/>
        <end position="353"/>
    </location>
</feature>
<organism>
    <name type="scientific">Archaeoglobus fulgidus (strain ATCC 49558 / DSM 4304 / JCM 9628 / NBRC 100126 / VC-16)</name>
    <dbReference type="NCBI Taxonomy" id="224325"/>
    <lineage>
        <taxon>Archaea</taxon>
        <taxon>Methanobacteriati</taxon>
        <taxon>Methanobacteriota</taxon>
        <taxon>Archaeoglobi</taxon>
        <taxon>Archaeoglobales</taxon>
        <taxon>Archaeoglobaceae</taxon>
        <taxon>Archaeoglobus</taxon>
    </lineage>
</organism>
<accession>O30166</accession>
<proteinExistence type="predicted"/>
<reference key="1">
    <citation type="journal article" date="1997" name="Nature">
        <title>The complete genome sequence of the hyperthermophilic, sulphate-reducing archaeon Archaeoglobus fulgidus.</title>
        <authorList>
            <person name="Klenk H.-P."/>
            <person name="Clayton R.A."/>
            <person name="Tomb J.-F."/>
            <person name="White O."/>
            <person name="Nelson K.E."/>
            <person name="Ketchum K.A."/>
            <person name="Dodson R.J."/>
            <person name="Gwinn M.L."/>
            <person name="Hickey E.K."/>
            <person name="Peterson J.D."/>
            <person name="Richardson D.L."/>
            <person name="Kerlavage A.R."/>
            <person name="Graham D.E."/>
            <person name="Kyrpides N.C."/>
            <person name="Fleischmann R.D."/>
            <person name="Quackenbush J."/>
            <person name="Lee N.H."/>
            <person name="Sutton G.G."/>
            <person name="Gill S.R."/>
            <person name="Kirkness E.F."/>
            <person name="Dougherty B.A."/>
            <person name="McKenney K."/>
            <person name="Adams M.D."/>
            <person name="Loftus B.J."/>
            <person name="Peterson S.N."/>
            <person name="Reich C.I."/>
            <person name="McNeil L.K."/>
            <person name="Badger J.H."/>
            <person name="Glodek A."/>
            <person name="Zhou L."/>
            <person name="Overbeek R."/>
            <person name="Gocayne J.D."/>
            <person name="Weidman J.F."/>
            <person name="McDonald L.A."/>
            <person name="Utterback T.R."/>
            <person name="Cotton M.D."/>
            <person name="Spriggs T."/>
            <person name="Artiach P."/>
            <person name="Kaine B.P."/>
            <person name="Sykes S.M."/>
            <person name="Sadow P.W."/>
            <person name="D'Andrea K.P."/>
            <person name="Bowman C."/>
            <person name="Fujii C."/>
            <person name="Garland S.A."/>
            <person name="Mason T.M."/>
            <person name="Olsen G.J."/>
            <person name="Fraser C.M."/>
            <person name="Smith H.O."/>
            <person name="Woese C.R."/>
            <person name="Venter J.C."/>
        </authorList>
    </citation>
    <scope>NUCLEOTIDE SEQUENCE [LARGE SCALE GENOMIC DNA]</scope>
    <source>
        <strain>ATCC 49558 / DSM 4304 / JCM 9628 / NBRC 100126 / VC-16</strain>
    </source>
</reference>
<name>Y070_ARCFU</name>
<dbReference type="EMBL" id="AE000782">
    <property type="protein sequence ID" value="AAB91169.1"/>
    <property type="molecule type" value="Genomic_DNA"/>
</dbReference>
<dbReference type="PIR" id="F69258">
    <property type="entry name" value="F69258"/>
</dbReference>
<dbReference type="STRING" id="224325.AF_0070"/>
<dbReference type="PaxDb" id="224325-AF_0070"/>
<dbReference type="EnsemblBacteria" id="AAB91169">
    <property type="protein sequence ID" value="AAB91169"/>
    <property type="gene ID" value="AF_0070"/>
</dbReference>
<dbReference type="KEGG" id="afu:AF_0070"/>
<dbReference type="eggNOG" id="arCOG10383">
    <property type="taxonomic scope" value="Archaea"/>
</dbReference>
<dbReference type="HOGENOM" id="CLU_820447_0_0_2"/>
<dbReference type="OrthoDB" id="358646at2157"/>
<dbReference type="Proteomes" id="UP000002199">
    <property type="component" value="Chromosome"/>
</dbReference>
<protein>
    <recommendedName>
        <fullName>Uncharacterized protein AF_0070</fullName>
    </recommendedName>
</protein>
<gene>
    <name type="ordered locus">AF_0070</name>
</gene>
<keyword id="KW-1185">Reference proteome</keyword>